<proteinExistence type="inferred from homology"/>
<comment type="function">
    <text evidence="1">Nucleotidase that shows phosphatase activity on nucleoside 5'-monophosphates.</text>
</comment>
<comment type="catalytic activity">
    <reaction evidence="1">
        <text>a ribonucleoside 5'-phosphate + H2O = a ribonucleoside + phosphate</text>
        <dbReference type="Rhea" id="RHEA:12484"/>
        <dbReference type="ChEBI" id="CHEBI:15377"/>
        <dbReference type="ChEBI" id="CHEBI:18254"/>
        <dbReference type="ChEBI" id="CHEBI:43474"/>
        <dbReference type="ChEBI" id="CHEBI:58043"/>
        <dbReference type="EC" id="3.1.3.5"/>
    </reaction>
</comment>
<comment type="cofactor">
    <cofactor evidence="1">
        <name>a divalent metal cation</name>
        <dbReference type="ChEBI" id="CHEBI:60240"/>
    </cofactor>
    <text evidence="1">Binds 1 divalent metal cation per subunit.</text>
</comment>
<comment type="subcellular location">
    <subcellularLocation>
        <location evidence="1">Cytoplasm</location>
    </subcellularLocation>
</comment>
<comment type="similarity">
    <text evidence="1">Belongs to the SurE nucleotidase family.</text>
</comment>
<reference key="1">
    <citation type="journal article" date="2004" name="J. Bacteriol.">
        <title>Comparative genomics of two Leptospira interrogans serovars reveals novel insights into physiology and pathogenesis.</title>
        <authorList>
            <person name="Nascimento A.L.T.O."/>
            <person name="Ko A.I."/>
            <person name="Martins E.A.L."/>
            <person name="Monteiro-Vitorello C.B."/>
            <person name="Ho P.L."/>
            <person name="Haake D.A."/>
            <person name="Verjovski-Almeida S."/>
            <person name="Hartskeerl R.A."/>
            <person name="Marques M.V."/>
            <person name="Oliveira M.C."/>
            <person name="Menck C.F.M."/>
            <person name="Leite L.C.C."/>
            <person name="Carrer H."/>
            <person name="Coutinho L.L."/>
            <person name="Degrave W.M."/>
            <person name="Dellagostin O.A."/>
            <person name="El-Dorry H."/>
            <person name="Ferro E.S."/>
            <person name="Ferro M.I.T."/>
            <person name="Furlan L.R."/>
            <person name="Gamberini M."/>
            <person name="Giglioti E.A."/>
            <person name="Goes-Neto A."/>
            <person name="Goldman G.H."/>
            <person name="Goldman M.H.S."/>
            <person name="Harakava R."/>
            <person name="Jeronimo S.M.B."/>
            <person name="Junqueira-de-Azevedo I.L.M."/>
            <person name="Kimura E.T."/>
            <person name="Kuramae E.E."/>
            <person name="Lemos E.G.M."/>
            <person name="Lemos M.V.F."/>
            <person name="Marino C.L."/>
            <person name="Nunes L.R."/>
            <person name="de Oliveira R.C."/>
            <person name="Pereira G.G."/>
            <person name="Reis M.S."/>
            <person name="Schriefer A."/>
            <person name="Siqueira W.J."/>
            <person name="Sommer P."/>
            <person name="Tsai S.M."/>
            <person name="Simpson A.J.G."/>
            <person name="Ferro J.A."/>
            <person name="Camargo L.E.A."/>
            <person name="Kitajima J.P."/>
            <person name="Setubal J.C."/>
            <person name="Van Sluys M.A."/>
        </authorList>
    </citation>
    <scope>NUCLEOTIDE SEQUENCE [LARGE SCALE GENOMIC DNA]</scope>
    <source>
        <strain>Fiocruz L1-130</strain>
    </source>
</reference>
<protein>
    <recommendedName>
        <fullName evidence="1">5'-nucleotidase SurE</fullName>
        <ecNumber evidence="1">3.1.3.5</ecNumber>
    </recommendedName>
    <alternativeName>
        <fullName evidence="1">Nucleoside 5'-monophosphate phosphohydrolase</fullName>
    </alternativeName>
</protein>
<accession>Q72MU5</accession>
<feature type="chain" id="PRO_0000111820" description="5'-nucleotidase SurE">
    <location>
        <begin position="1"/>
        <end position="250"/>
    </location>
</feature>
<feature type="binding site" evidence="1">
    <location>
        <position position="8"/>
    </location>
    <ligand>
        <name>a divalent metal cation</name>
        <dbReference type="ChEBI" id="CHEBI:60240"/>
    </ligand>
</feature>
<feature type="binding site" evidence="1">
    <location>
        <position position="9"/>
    </location>
    <ligand>
        <name>a divalent metal cation</name>
        <dbReference type="ChEBI" id="CHEBI:60240"/>
    </ligand>
</feature>
<feature type="binding site" evidence="1">
    <location>
        <position position="39"/>
    </location>
    <ligand>
        <name>a divalent metal cation</name>
        <dbReference type="ChEBI" id="CHEBI:60240"/>
    </ligand>
</feature>
<feature type="binding site" evidence="1">
    <location>
        <position position="91"/>
    </location>
    <ligand>
        <name>a divalent metal cation</name>
        <dbReference type="ChEBI" id="CHEBI:60240"/>
    </ligand>
</feature>
<evidence type="ECO:0000255" key="1">
    <source>
        <dbReference type="HAMAP-Rule" id="MF_00060"/>
    </source>
</evidence>
<dbReference type="EC" id="3.1.3.5" evidence="1"/>
<dbReference type="EMBL" id="AE016823">
    <property type="protein sequence ID" value="AAS71643.1"/>
    <property type="molecule type" value="Genomic_DNA"/>
</dbReference>
<dbReference type="RefSeq" id="WP_001023250.1">
    <property type="nucleotide sequence ID" value="NC_005823.1"/>
</dbReference>
<dbReference type="SMR" id="Q72MU5"/>
<dbReference type="GeneID" id="61142968"/>
<dbReference type="KEGG" id="lic:LIC_13094"/>
<dbReference type="HOGENOM" id="CLU_045192_1_2_12"/>
<dbReference type="Proteomes" id="UP000007037">
    <property type="component" value="Chromosome I"/>
</dbReference>
<dbReference type="GO" id="GO:0005737">
    <property type="term" value="C:cytoplasm"/>
    <property type="evidence" value="ECO:0007669"/>
    <property type="project" value="UniProtKB-SubCell"/>
</dbReference>
<dbReference type="GO" id="GO:0008254">
    <property type="term" value="F:3'-nucleotidase activity"/>
    <property type="evidence" value="ECO:0007669"/>
    <property type="project" value="TreeGrafter"/>
</dbReference>
<dbReference type="GO" id="GO:0008253">
    <property type="term" value="F:5'-nucleotidase activity"/>
    <property type="evidence" value="ECO:0007669"/>
    <property type="project" value="UniProtKB-UniRule"/>
</dbReference>
<dbReference type="GO" id="GO:0004309">
    <property type="term" value="F:exopolyphosphatase activity"/>
    <property type="evidence" value="ECO:0007669"/>
    <property type="project" value="TreeGrafter"/>
</dbReference>
<dbReference type="GO" id="GO:0046872">
    <property type="term" value="F:metal ion binding"/>
    <property type="evidence" value="ECO:0007669"/>
    <property type="project" value="UniProtKB-UniRule"/>
</dbReference>
<dbReference type="GO" id="GO:0000166">
    <property type="term" value="F:nucleotide binding"/>
    <property type="evidence" value="ECO:0007669"/>
    <property type="project" value="UniProtKB-KW"/>
</dbReference>
<dbReference type="FunFam" id="3.40.1210.10:FF:000001">
    <property type="entry name" value="5'/3'-nucleotidase SurE"/>
    <property type="match status" value="1"/>
</dbReference>
<dbReference type="Gene3D" id="3.40.1210.10">
    <property type="entry name" value="Survival protein SurE-like phosphatase/nucleotidase"/>
    <property type="match status" value="1"/>
</dbReference>
<dbReference type="HAMAP" id="MF_00060">
    <property type="entry name" value="SurE"/>
    <property type="match status" value="1"/>
</dbReference>
<dbReference type="InterPro" id="IPR030048">
    <property type="entry name" value="SurE"/>
</dbReference>
<dbReference type="InterPro" id="IPR002828">
    <property type="entry name" value="SurE-like_Pase/nucleotidase"/>
</dbReference>
<dbReference type="InterPro" id="IPR036523">
    <property type="entry name" value="SurE-like_sf"/>
</dbReference>
<dbReference type="NCBIfam" id="TIGR00087">
    <property type="entry name" value="surE"/>
    <property type="match status" value="1"/>
</dbReference>
<dbReference type="PANTHER" id="PTHR30457">
    <property type="entry name" value="5'-NUCLEOTIDASE SURE"/>
    <property type="match status" value="1"/>
</dbReference>
<dbReference type="PANTHER" id="PTHR30457:SF12">
    <property type="entry name" value="5'_3'-NUCLEOTIDASE SURE"/>
    <property type="match status" value="1"/>
</dbReference>
<dbReference type="Pfam" id="PF01975">
    <property type="entry name" value="SurE"/>
    <property type="match status" value="1"/>
</dbReference>
<dbReference type="SUPFAM" id="SSF64167">
    <property type="entry name" value="SurE-like"/>
    <property type="match status" value="1"/>
</dbReference>
<sequence>MNILITNDDGIASSGIKALETILQKEHNTYLIAPLRERSATSMALSIYDSMRVERINDNHYIVDGYPADCVNIGLHGEIFPKIDLVLSGINRGVNMGHDVHYSGTVGAARHGAIHKKLSLAVSSGNIAKDYDYIREAEFVRKFINEYSSQLKVGVVYNMNIPSDFISSMENLRVTKLGKRTYEDTYSQKNIIGGIADFYLGGSELGHSTEEGTDFTAFFSGKISLTPLSLDQTDFSILTQLSDSLSKNIS</sequence>
<name>SURE_LEPIC</name>
<gene>
    <name evidence="1" type="primary">surE</name>
    <name type="ordered locus">LIC_13094</name>
</gene>
<organism>
    <name type="scientific">Leptospira interrogans serogroup Icterohaemorrhagiae serovar copenhageni (strain Fiocruz L1-130)</name>
    <dbReference type="NCBI Taxonomy" id="267671"/>
    <lineage>
        <taxon>Bacteria</taxon>
        <taxon>Pseudomonadati</taxon>
        <taxon>Spirochaetota</taxon>
        <taxon>Spirochaetia</taxon>
        <taxon>Leptospirales</taxon>
        <taxon>Leptospiraceae</taxon>
        <taxon>Leptospira</taxon>
    </lineage>
</organism>
<keyword id="KW-0963">Cytoplasm</keyword>
<keyword id="KW-0378">Hydrolase</keyword>
<keyword id="KW-0479">Metal-binding</keyword>
<keyword id="KW-0547">Nucleotide-binding</keyword>